<sequence length="174" mass="18228">MAKVQAKMQGKAVGPEDGLREKMIAINRVTKVVKGGRILGFAALTVVGDGDGSVGMGKGKSKEVPAAVQKAMEEARRNMTKITLKNGSIHHKVMGQHGAASVMMAPAPKGTGIIAGGPMRAVFEVIGITDIVAKSHGSTNPYNMVRATLDALSHDRTPSEVAAKRGKTIEELFV</sequence>
<proteinExistence type="inferred from homology"/>
<dbReference type="EMBL" id="CP000267">
    <property type="protein sequence ID" value="ABD71913.1"/>
    <property type="molecule type" value="Genomic_DNA"/>
</dbReference>
<dbReference type="RefSeq" id="WP_011466470.1">
    <property type="nucleotide sequence ID" value="NC_007908.1"/>
</dbReference>
<dbReference type="SMR" id="Q21QP0"/>
<dbReference type="STRING" id="338969.Rfer_4226"/>
<dbReference type="KEGG" id="rfr:Rfer_4226"/>
<dbReference type="eggNOG" id="COG0098">
    <property type="taxonomic scope" value="Bacteria"/>
</dbReference>
<dbReference type="HOGENOM" id="CLU_065898_2_2_4"/>
<dbReference type="OrthoDB" id="9809045at2"/>
<dbReference type="Proteomes" id="UP000008332">
    <property type="component" value="Chromosome"/>
</dbReference>
<dbReference type="GO" id="GO:0015935">
    <property type="term" value="C:small ribosomal subunit"/>
    <property type="evidence" value="ECO:0007669"/>
    <property type="project" value="InterPro"/>
</dbReference>
<dbReference type="GO" id="GO:0019843">
    <property type="term" value="F:rRNA binding"/>
    <property type="evidence" value="ECO:0007669"/>
    <property type="project" value="UniProtKB-UniRule"/>
</dbReference>
<dbReference type="GO" id="GO:0003735">
    <property type="term" value="F:structural constituent of ribosome"/>
    <property type="evidence" value="ECO:0007669"/>
    <property type="project" value="InterPro"/>
</dbReference>
<dbReference type="GO" id="GO:0006412">
    <property type="term" value="P:translation"/>
    <property type="evidence" value="ECO:0007669"/>
    <property type="project" value="UniProtKB-UniRule"/>
</dbReference>
<dbReference type="FunFam" id="3.30.160.20:FF:000001">
    <property type="entry name" value="30S ribosomal protein S5"/>
    <property type="match status" value="1"/>
</dbReference>
<dbReference type="FunFam" id="3.30.230.10:FF:000002">
    <property type="entry name" value="30S ribosomal protein S5"/>
    <property type="match status" value="1"/>
</dbReference>
<dbReference type="Gene3D" id="3.30.160.20">
    <property type="match status" value="1"/>
</dbReference>
<dbReference type="Gene3D" id="3.30.230.10">
    <property type="match status" value="1"/>
</dbReference>
<dbReference type="HAMAP" id="MF_01307_B">
    <property type="entry name" value="Ribosomal_uS5_B"/>
    <property type="match status" value="1"/>
</dbReference>
<dbReference type="InterPro" id="IPR020568">
    <property type="entry name" value="Ribosomal_Su5_D2-typ_SF"/>
</dbReference>
<dbReference type="InterPro" id="IPR000851">
    <property type="entry name" value="Ribosomal_uS5"/>
</dbReference>
<dbReference type="InterPro" id="IPR005712">
    <property type="entry name" value="Ribosomal_uS5_bac-type"/>
</dbReference>
<dbReference type="InterPro" id="IPR005324">
    <property type="entry name" value="Ribosomal_uS5_C"/>
</dbReference>
<dbReference type="InterPro" id="IPR013810">
    <property type="entry name" value="Ribosomal_uS5_N"/>
</dbReference>
<dbReference type="InterPro" id="IPR018192">
    <property type="entry name" value="Ribosomal_uS5_N_CS"/>
</dbReference>
<dbReference type="InterPro" id="IPR014721">
    <property type="entry name" value="Ribsml_uS5_D2-typ_fold_subgr"/>
</dbReference>
<dbReference type="NCBIfam" id="TIGR01021">
    <property type="entry name" value="rpsE_bact"/>
    <property type="match status" value="1"/>
</dbReference>
<dbReference type="PANTHER" id="PTHR48277">
    <property type="entry name" value="MITOCHONDRIAL RIBOSOMAL PROTEIN S5"/>
    <property type="match status" value="1"/>
</dbReference>
<dbReference type="PANTHER" id="PTHR48277:SF1">
    <property type="entry name" value="MITOCHONDRIAL RIBOSOMAL PROTEIN S5"/>
    <property type="match status" value="1"/>
</dbReference>
<dbReference type="Pfam" id="PF00333">
    <property type="entry name" value="Ribosomal_S5"/>
    <property type="match status" value="1"/>
</dbReference>
<dbReference type="Pfam" id="PF03719">
    <property type="entry name" value="Ribosomal_S5_C"/>
    <property type="match status" value="1"/>
</dbReference>
<dbReference type="SUPFAM" id="SSF54768">
    <property type="entry name" value="dsRNA-binding domain-like"/>
    <property type="match status" value="1"/>
</dbReference>
<dbReference type="SUPFAM" id="SSF54211">
    <property type="entry name" value="Ribosomal protein S5 domain 2-like"/>
    <property type="match status" value="1"/>
</dbReference>
<dbReference type="PROSITE" id="PS00585">
    <property type="entry name" value="RIBOSOMAL_S5"/>
    <property type="match status" value="1"/>
</dbReference>
<dbReference type="PROSITE" id="PS50881">
    <property type="entry name" value="S5_DSRBD"/>
    <property type="match status" value="1"/>
</dbReference>
<evidence type="ECO:0000255" key="1">
    <source>
        <dbReference type="HAMAP-Rule" id="MF_01307"/>
    </source>
</evidence>
<evidence type="ECO:0000305" key="2"/>
<comment type="function">
    <text evidence="1">With S4 and S12 plays an important role in translational accuracy.</text>
</comment>
<comment type="function">
    <text evidence="1">Located at the back of the 30S subunit body where it stabilizes the conformation of the head with respect to the body.</text>
</comment>
<comment type="subunit">
    <text evidence="1">Part of the 30S ribosomal subunit. Contacts proteins S4 and S8.</text>
</comment>
<comment type="domain">
    <text>The N-terminal domain interacts with the head of the 30S subunit; the C-terminal domain interacts with the body and contacts protein S4. The interaction surface between S4 and S5 is involved in control of translational fidelity.</text>
</comment>
<comment type="similarity">
    <text evidence="1">Belongs to the universal ribosomal protein uS5 family.</text>
</comment>
<feature type="chain" id="PRO_0000323180" description="Small ribosomal subunit protein uS5">
    <location>
        <begin position="1"/>
        <end position="174"/>
    </location>
</feature>
<feature type="domain" description="S5 DRBM" evidence="1">
    <location>
        <begin position="19"/>
        <end position="82"/>
    </location>
</feature>
<reference key="1">
    <citation type="submission" date="2006-02" db="EMBL/GenBank/DDBJ databases">
        <title>Complete sequence of chromosome of Rhodoferax ferrireducens DSM 15236.</title>
        <authorList>
            <person name="Copeland A."/>
            <person name="Lucas S."/>
            <person name="Lapidus A."/>
            <person name="Barry K."/>
            <person name="Detter J.C."/>
            <person name="Glavina del Rio T."/>
            <person name="Hammon N."/>
            <person name="Israni S."/>
            <person name="Pitluck S."/>
            <person name="Brettin T."/>
            <person name="Bruce D."/>
            <person name="Han C."/>
            <person name="Tapia R."/>
            <person name="Gilna P."/>
            <person name="Kiss H."/>
            <person name="Schmutz J."/>
            <person name="Larimer F."/>
            <person name="Land M."/>
            <person name="Kyrpides N."/>
            <person name="Ivanova N."/>
            <person name="Richardson P."/>
        </authorList>
    </citation>
    <scope>NUCLEOTIDE SEQUENCE [LARGE SCALE GENOMIC DNA]</scope>
    <source>
        <strain>ATCC BAA-621 / DSM 15236 / T118</strain>
    </source>
</reference>
<keyword id="KW-1185">Reference proteome</keyword>
<keyword id="KW-0687">Ribonucleoprotein</keyword>
<keyword id="KW-0689">Ribosomal protein</keyword>
<keyword id="KW-0694">RNA-binding</keyword>
<keyword id="KW-0699">rRNA-binding</keyword>
<accession>Q21QP0</accession>
<organism>
    <name type="scientific">Albidiferax ferrireducens (strain ATCC BAA-621 / DSM 15236 / T118)</name>
    <name type="common">Rhodoferax ferrireducens</name>
    <dbReference type="NCBI Taxonomy" id="338969"/>
    <lineage>
        <taxon>Bacteria</taxon>
        <taxon>Pseudomonadati</taxon>
        <taxon>Pseudomonadota</taxon>
        <taxon>Betaproteobacteria</taxon>
        <taxon>Burkholderiales</taxon>
        <taxon>Comamonadaceae</taxon>
        <taxon>Rhodoferax</taxon>
    </lineage>
</organism>
<name>RS5_ALBFT</name>
<gene>
    <name evidence="1" type="primary">rpsE</name>
    <name type="ordered locus">Rfer_4226</name>
</gene>
<protein>
    <recommendedName>
        <fullName evidence="1">Small ribosomal subunit protein uS5</fullName>
    </recommendedName>
    <alternativeName>
        <fullName evidence="2">30S ribosomal protein S5</fullName>
    </alternativeName>
</protein>